<comment type="function">
    <text evidence="1">Catalyzes the conversion of 1-hydroxy-2-methyl-2-(E)-butenyl 4-diphosphate (HMBPP) into a mixture of isopentenyl diphosphate (IPP) and dimethylallyl diphosphate (DMAPP). Acts in the terminal step of the DOXP/MEP pathway for isoprenoid precursor biosynthesis.</text>
</comment>
<comment type="catalytic activity">
    <reaction evidence="1">
        <text>isopentenyl diphosphate + 2 oxidized [2Fe-2S]-[ferredoxin] + H2O = (2E)-4-hydroxy-3-methylbut-2-enyl diphosphate + 2 reduced [2Fe-2S]-[ferredoxin] + 2 H(+)</text>
        <dbReference type="Rhea" id="RHEA:24488"/>
        <dbReference type="Rhea" id="RHEA-COMP:10000"/>
        <dbReference type="Rhea" id="RHEA-COMP:10001"/>
        <dbReference type="ChEBI" id="CHEBI:15377"/>
        <dbReference type="ChEBI" id="CHEBI:15378"/>
        <dbReference type="ChEBI" id="CHEBI:33737"/>
        <dbReference type="ChEBI" id="CHEBI:33738"/>
        <dbReference type="ChEBI" id="CHEBI:128753"/>
        <dbReference type="ChEBI" id="CHEBI:128769"/>
        <dbReference type="EC" id="1.17.7.4"/>
    </reaction>
</comment>
<comment type="catalytic activity">
    <reaction evidence="1">
        <text>dimethylallyl diphosphate + 2 oxidized [2Fe-2S]-[ferredoxin] + H2O = (2E)-4-hydroxy-3-methylbut-2-enyl diphosphate + 2 reduced [2Fe-2S]-[ferredoxin] + 2 H(+)</text>
        <dbReference type="Rhea" id="RHEA:24825"/>
        <dbReference type="Rhea" id="RHEA-COMP:10000"/>
        <dbReference type="Rhea" id="RHEA-COMP:10001"/>
        <dbReference type="ChEBI" id="CHEBI:15377"/>
        <dbReference type="ChEBI" id="CHEBI:15378"/>
        <dbReference type="ChEBI" id="CHEBI:33737"/>
        <dbReference type="ChEBI" id="CHEBI:33738"/>
        <dbReference type="ChEBI" id="CHEBI:57623"/>
        <dbReference type="ChEBI" id="CHEBI:128753"/>
        <dbReference type="EC" id="1.17.7.4"/>
    </reaction>
</comment>
<comment type="cofactor">
    <cofactor evidence="1">
        <name>[4Fe-4S] cluster</name>
        <dbReference type="ChEBI" id="CHEBI:49883"/>
    </cofactor>
    <text evidence="1">Binds 1 [4Fe-4S] cluster per subunit.</text>
</comment>
<comment type="pathway">
    <text evidence="1">Isoprenoid biosynthesis; dimethylallyl diphosphate biosynthesis; dimethylallyl diphosphate from (2E)-4-hydroxy-3-methylbutenyl diphosphate: step 1/1.</text>
</comment>
<comment type="pathway">
    <text evidence="1">Isoprenoid biosynthesis; isopentenyl diphosphate biosynthesis via DXP pathway; isopentenyl diphosphate from 1-deoxy-D-xylulose 5-phosphate: step 6/6.</text>
</comment>
<comment type="similarity">
    <text evidence="1">Belongs to the IspH family.</text>
</comment>
<proteinExistence type="inferred from homology"/>
<evidence type="ECO:0000255" key="1">
    <source>
        <dbReference type="HAMAP-Rule" id="MF_00191"/>
    </source>
</evidence>
<sequence length="278" mass="29899">MDVKIAKTAGFCWGVRRTVDKVMEVADQHRAPVVTLGPIIHNPQAVARFSEKGVGTVNGIGEVTDGTTVVVRTHGAVREELERAEARGLEVVDGTCPYVKYPQAMAQRLSREGYHIVIVGDANHAEIKGVISYSEQPCTVVKPGGPVPEIKAKKVAVIAQTTCIGAEFERVVGVLALRHKEVRAVNTICNDTEERQADARALASEVDAVVVVGGKNSANTRHLAEICRAIQPRTWHVETEAELGAAWFEGCRVVGLSAGASTPDWVVEGVAAWLRALR</sequence>
<organism>
    <name type="scientific">Anaeromyxobacter sp. (strain K)</name>
    <dbReference type="NCBI Taxonomy" id="447217"/>
    <lineage>
        <taxon>Bacteria</taxon>
        <taxon>Pseudomonadati</taxon>
        <taxon>Myxococcota</taxon>
        <taxon>Myxococcia</taxon>
        <taxon>Myxococcales</taxon>
        <taxon>Cystobacterineae</taxon>
        <taxon>Anaeromyxobacteraceae</taxon>
        <taxon>Anaeromyxobacter</taxon>
    </lineage>
</organism>
<dbReference type="EC" id="1.17.7.4" evidence="1"/>
<dbReference type="EMBL" id="CP001131">
    <property type="protein sequence ID" value="ACG73575.1"/>
    <property type="molecule type" value="Genomic_DNA"/>
</dbReference>
<dbReference type="SMR" id="B4UEK4"/>
<dbReference type="KEGG" id="ank:AnaeK_2348"/>
<dbReference type="HOGENOM" id="CLU_027486_0_1_7"/>
<dbReference type="OrthoDB" id="9804068at2"/>
<dbReference type="UniPathway" id="UPA00056">
    <property type="reaction ID" value="UER00097"/>
</dbReference>
<dbReference type="UniPathway" id="UPA00059">
    <property type="reaction ID" value="UER00105"/>
</dbReference>
<dbReference type="Proteomes" id="UP000001871">
    <property type="component" value="Chromosome"/>
</dbReference>
<dbReference type="GO" id="GO:0051539">
    <property type="term" value="F:4 iron, 4 sulfur cluster binding"/>
    <property type="evidence" value="ECO:0007669"/>
    <property type="project" value="UniProtKB-UniRule"/>
</dbReference>
<dbReference type="GO" id="GO:0051745">
    <property type="term" value="F:4-hydroxy-3-methylbut-2-enyl diphosphate reductase activity"/>
    <property type="evidence" value="ECO:0007669"/>
    <property type="project" value="UniProtKB-UniRule"/>
</dbReference>
<dbReference type="GO" id="GO:0046872">
    <property type="term" value="F:metal ion binding"/>
    <property type="evidence" value="ECO:0007669"/>
    <property type="project" value="UniProtKB-KW"/>
</dbReference>
<dbReference type="GO" id="GO:0050992">
    <property type="term" value="P:dimethylallyl diphosphate biosynthetic process"/>
    <property type="evidence" value="ECO:0007669"/>
    <property type="project" value="UniProtKB-UniRule"/>
</dbReference>
<dbReference type="GO" id="GO:0019288">
    <property type="term" value="P:isopentenyl diphosphate biosynthetic process, methylerythritol 4-phosphate pathway"/>
    <property type="evidence" value="ECO:0007669"/>
    <property type="project" value="UniProtKB-UniRule"/>
</dbReference>
<dbReference type="GO" id="GO:0016114">
    <property type="term" value="P:terpenoid biosynthetic process"/>
    <property type="evidence" value="ECO:0007669"/>
    <property type="project" value="UniProtKB-UniRule"/>
</dbReference>
<dbReference type="CDD" id="cd13944">
    <property type="entry name" value="lytB_ispH"/>
    <property type="match status" value="1"/>
</dbReference>
<dbReference type="Gene3D" id="3.40.50.11270">
    <property type="match status" value="1"/>
</dbReference>
<dbReference type="Gene3D" id="3.40.1010.20">
    <property type="entry name" value="4-hydroxy-3-methylbut-2-enyl diphosphate reductase, catalytic domain"/>
    <property type="match status" value="2"/>
</dbReference>
<dbReference type="HAMAP" id="MF_00191">
    <property type="entry name" value="IspH"/>
    <property type="match status" value="1"/>
</dbReference>
<dbReference type="InterPro" id="IPR003451">
    <property type="entry name" value="LytB/IspH"/>
</dbReference>
<dbReference type="NCBIfam" id="TIGR00216">
    <property type="entry name" value="ispH_lytB"/>
    <property type="match status" value="1"/>
</dbReference>
<dbReference type="PANTHER" id="PTHR30426">
    <property type="entry name" value="4-HYDROXY-3-METHYLBUT-2-ENYL DIPHOSPHATE REDUCTASE"/>
    <property type="match status" value="1"/>
</dbReference>
<dbReference type="PANTHER" id="PTHR30426:SF0">
    <property type="entry name" value="4-HYDROXY-3-METHYLBUT-2-ENYL DIPHOSPHATE REDUCTASE"/>
    <property type="match status" value="1"/>
</dbReference>
<dbReference type="Pfam" id="PF02401">
    <property type="entry name" value="LYTB"/>
    <property type="match status" value="1"/>
</dbReference>
<name>ISPH_ANASK</name>
<feature type="chain" id="PRO_1000098931" description="4-hydroxy-3-methylbut-2-enyl diphosphate reductase">
    <location>
        <begin position="1"/>
        <end position="278"/>
    </location>
</feature>
<feature type="active site" description="Proton donor" evidence="1">
    <location>
        <position position="126"/>
    </location>
</feature>
<feature type="binding site" evidence="1">
    <location>
        <position position="12"/>
    </location>
    <ligand>
        <name>[4Fe-4S] cluster</name>
        <dbReference type="ChEBI" id="CHEBI:49883"/>
    </ligand>
</feature>
<feature type="binding site" evidence="1">
    <location>
        <position position="41"/>
    </location>
    <ligand>
        <name>(2E)-4-hydroxy-3-methylbut-2-enyl diphosphate</name>
        <dbReference type="ChEBI" id="CHEBI:128753"/>
    </ligand>
</feature>
<feature type="binding site" evidence="1">
    <location>
        <position position="41"/>
    </location>
    <ligand>
        <name>dimethylallyl diphosphate</name>
        <dbReference type="ChEBI" id="CHEBI:57623"/>
    </ligand>
</feature>
<feature type="binding site" evidence="1">
    <location>
        <position position="41"/>
    </location>
    <ligand>
        <name>isopentenyl diphosphate</name>
        <dbReference type="ChEBI" id="CHEBI:128769"/>
    </ligand>
</feature>
<feature type="binding site" evidence="1">
    <location>
        <position position="74"/>
    </location>
    <ligand>
        <name>(2E)-4-hydroxy-3-methylbut-2-enyl diphosphate</name>
        <dbReference type="ChEBI" id="CHEBI:128753"/>
    </ligand>
</feature>
<feature type="binding site" evidence="1">
    <location>
        <position position="74"/>
    </location>
    <ligand>
        <name>dimethylallyl diphosphate</name>
        <dbReference type="ChEBI" id="CHEBI:57623"/>
    </ligand>
</feature>
<feature type="binding site" evidence="1">
    <location>
        <position position="74"/>
    </location>
    <ligand>
        <name>isopentenyl diphosphate</name>
        <dbReference type="ChEBI" id="CHEBI:128769"/>
    </ligand>
</feature>
<feature type="binding site" evidence="1">
    <location>
        <position position="96"/>
    </location>
    <ligand>
        <name>[4Fe-4S] cluster</name>
        <dbReference type="ChEBI" id="CHEBI:49883"/>
    </ligand>
</feature>
<feature type="binding site" evidence="1">
    <location>
        <position position="124"/>
    </location>
    <ligand>
        <name>(2E)-4-hydroxy-3-methylbut-2-enyl diphosphate</name>
        <dbReference type="ChEBI" id="CHEBI:128753"/>
    </ligand>
</feature>
<feature type="binding site" evidence="1">
    <location>
        <position position="124"/>
    </location>
    <ligand>
        <name>dimethylallyl diphosphate</name>
        <dbReference type="ChEBI" id="CHEBI:57623"/>
    </ligand>
</feature>
<feature type="binding site" evidence="1">
    <location>
        <position position="124"/>
    </location>
    <ligand>
        <name>isopentenyl diphosphate</name>
        <dbReference type="ChEBI" id="CHEBI:128769"/>
    </ligand>
</feature>
<feature type="binding site" evidence="1">
    <location>
        <position position="161"/>
    </location>
    <ligand>
        <name>(2E)-4-hydroxy-3-methylbut-2-enyl diphosphate</name>
        <dbReference type="ChEBI" id="CHEBI:128753"/>
    </ligand>
</feature>
<feature type="binding site" evidence="1">
    <location>
        <position position="189"/>
    </location>
    <ligand>
        <name>[4Fe-4S] cluster</name>
        <dbReference type="ChEBI" id="CHEBI:49883"/>
    </ligand>
</feature>
<feature type="binding site" evidence="1">
    <location>
        <position position="217"/>
    </location>
    <ligand>
        <name>(2E)-4-hydroxy-3-methylbut-2-enyl diphosphate</name>
        <dbReference type="ChEBI" id="CHEBI:128753"/>
    </ligand>
</feature>
<feature type="binding site" evidence="1">
    <location>
        <position position="217"/>
    </location>
    <ligand>
        <name>dimethylallyl diphosphate</name>
        <dbReference type="ChEBI" id="CHEBI:57623"/>
    </ligand>
</feature>
<feature type="binding site" evidence="1">
    <location>
        <position position="217"/>
    </location>
    <ligand>
        <name>isopentenyl diphosphate</name>
        <dbReference type="ChEBI" id="CHEBI:128769"/>
    </ligand>
</feature>
<feature type="binding site" evidence="1">
    <location>
        <position position="219"/>
    </location>
    <ligand>
        <name>(2E)-4-hydroxy-3-methylbut-2-enyl diphosphate</name>
        <dbReference type="ChEBI" id="CHEBI:128753"/>
    </ligand>
</feature>
<feature type="binding site" evidence="1">
    <location>
        <position position="219"/>
    </location>
    <ligand>
        <name>dimethylallyl diphosphate</name>
        <dbReference type="ChEBI" id="CHEBI:57623"/>
    </ligand>
</feature>
<feature type="binding site" evidence="1">
    <location>
        <position position="219"/>
    </location>
    <ligand>
        <name>isopentenyl diphosphate</name>
        <dbReference type="ChEBI" id="CHEBI:128769"/>
    </ligand>
</feature>
<feature type="binding site" evidence="1">
    <location>
        <position position="261"/>
    </location>
    <ligand>
        <name>(2E)-4-hydroxy-3-methylbut-2-enyl diphosphate</name>
        <dbReference type="ChEBI" id="CHEBI:128753"/>
    </ligand>
</feature>
<feature type="binding site" evidence="1">
    <location>
        <position position="261"/>
    </location>
    <ligand>
        <name>dimethylallyl diphosphate</name>
        <dbReference type="ChEBI" id="CHEBI:57623"/>
    </ligand>
</feature>
<feature type="binding site" evidence="1">
    <location>
        <position position="261"/>
    </location>
    <ligand>
        <name>isopentenyl diphosphate</name>
        <dbReference type="ChEBI" id="CHEBI:128769"/>
    </ligand>
</feature>
<gene>
    <name evidence="1" type="primary">ispH</name>
    <name type="ordered locus">AnaeK_2348</name>
</gene>
<accession>B4UEK4</accession>
<reference key="1">
    <citation type="submission" date="2008-08" db="EMBL/GenBank/DDBJ databases">
        <title>Complete sequence of Anaeromyxobacter sp. K.</title>
        <authorList>
            <consortium name="US DOE Joint Genome Institute"/>
            <person name="Lucas S."/>
            <person name="Copeland A."/>
            <person name="Lapidus A."/>
            <person name="Glavina del Rio T."/>
            <person name="Dalin E."/>
            <person name="Tice H."/>
            <person name="Bruce D."/>
            <person name="Goodwin L."/>
            <person name="Pitluck S."/>
            <person name="Saunders E."/>
            <person name="Brettin T."/>
            <person name="Detter J.C."/>
            <person name="Han C."/>
            <person name="Larimer F."/>
            <person name="Land M."/>
            <person name="Hauser L."/>
            <person name="Kyrpides N."/>
            <person name="Ovchinnikiva G."/>
            <person name="Beliaev A."/>
        </authorList>
    </citation>
    <scope>NUCLEOTIDE SEQUENCE [LARGE SCALE GENOMIC DNA]</scope>
    <source>
        <strain>K</strain>
    </source>
</reference>
<keyword id="KW-0004">4Fe-4S</keyword>
<keyword id="KW-0408">Iron</keyword>
<keyword id="KW-0411">Iron-sulfur</keyword>
<keyword id="KW-0414">Isoprene biosynthesis</keyword>
<keyword id="KW-0479">Metal-binding</keyword>
<keyword id="KW-0560">Oxidoreductase</keyword>
<protein>
    <recommendedName>
        <fullName evidence="1">4-hydroxy-3-methylbut-2-enyl diphosphate reductase</fullName>
        <shortName evidence="1">HMBPP reductase</shortName>
        <ecNumber evidence="1">1.17.7.4</ecNumber>
    </recommendedName>
</protein>